<organism>
    <name type="scientific">Salmonella paratyphi B (strain ATCC BAA-1250 / SPB7)</name>
    <dbReference type="NCBI Taxonomy" id="1016998"/>
    <lineage>
        <taxon>Bacteria</taxon>
        <taxon>Pseudomonadati</taxon>
        <taxon>Pseudomonadota</taxon>
        <taxon>Gammaproteobacteria</taxon>
        <taxon>Enterobacterales</taxon>
        <taxon>Enterobacteriaceae</taxon>
        <taxon>Salmonella</taxon>
    </lineage>
</organism>
<proteinExistence type="inferred from homology"/>
<sequence length="139" mass="15170">MKKGTVLNSEISSVISHLGHTDTLVVCDAGLPIPNSTARIDMALTQGVPSFMQVVDVVTREMQVEAAILATEIKQQNPQLHETLLTHLEQLQQHQGNTIKISYTTHEQFKKLTADSQAVIRSGECSPYANVILCAGVTF</sequence>
<comment type="function">
    <text evidence="1">Catalyzes the interconversion of beta-pyran and beta-furan forms of D-ribose.</text>
</comment>
<comment type="catalytic activity">
    <reaction evidence="1">
        <text>beta-D-ribopyranose = beta-D-ribofuranose</text>
        <dbReference type="Rhea" id="RHEA:25432"/>
        <dbReference type="ChEBI" id="CHEBI:27476"/>
        <dbReference type="ChEBI" id="CHEBI:47002"/>
        <dbReference type="EC" id="5.4.99.62"/>
    </reaction>
</comment>
<comment type="pathway">
    <text evidence="1">Carbohydrate metabolism; D-ribose degradation; D-ribose 5-phosphate from beta-D-ribopyranose: step 1/2.</text>
</comment>
<comment type="subunit">
    <text evidence="1">Homodecamer.</text>
</comment>
<comment type="subcellular location">
    <subcellularLocation>
        <location evidence="1">Cytoplasm</location>
    </subcellularLocation>
</comment>
<comment type="similarity">
    <text evidence="1">Belongs to the RbsD / FucU family. RbsD subfamily.</text>
</comment>
<accession>A9MXC5</accession>
<keyword id="KW-0119">Carbohydrate metabolism</keyword>
<keyword id="KW-0963">Cytoplasm</keyword>
<keyword id="KW-0413">Isomerase</keyword>
<reference key="1">
    <citation type="submission" date="2007-11" db="EMBL/GenBank/DDBJ databases">
        <authorList>
            <consortium name="The Salmonella enterica serovar Paratyphi B Genome Sequencing Project"/>
            <person name="McClelland M."/>
            <person name="Sanderson E.K."/>
            <person name="Porwollik S."/>
            <person name="Spieth J."/>
            <person name="Clifton W.S."/>
            <person name="Fulton R."/>
            <person name="Cordes M."/>
            <person name="Wollam A."/>
            <person name="Shah N."/>
            <person name="Pepin K."/>
            <person name="Bhonagiri V."/>
            <person name="Nash W."/>
            <person name="Johnson M."/>
            <person name="Thiruvilangam P."/>
            <person name="Wilson R."/>
        </authorList>
    </citation>
    <scope>NUCLEOTIDE SEQUENCE [LARGE SCALE GENOMIC DNA]</scope>
    <source>
        <strain>ATCC BAA-1250 / SPB7</strain>
    </source>
</reference>
<feature type="chain" id="PRO_0000346251" description="D-ribose pyranase">
    <location>
        <begin position="1"/>
        <end position="139"/>
    </location>
</feature>
<feature type="active site" description="Proton donor" evidence="1">
    <location>
        <position position="20"/>
    </location>
</feature>
<feature type="binding site" evidence="1">
    <location>
        <position position="28"/>
    </location>
    <ligand>
        <name>substrate</name>
    </ligand>
</feature>
<feature type="binding site" evidence="1">
    <location>
        <position position="106"/>
    </location>
    <ligand>
        <name>substrate</name>
    </ligand>
</feature>
<feature type="binding site" evidence="1">
    <location>
        <begin position="128"/>
        <end position="130"/>
    </location>
    <ligand>
        <name>substrate</name>
    </ligand>
</feature>
<evidence type="ECO:0000255" key="1">
    <source>
        <dbReference type="HAMAP-Rule" id="MF_01661"/>
    </source>
</evidence>
<dbReference type="EC" id="5.4.99.62" evidence="1"/>
<dbReference type="EMBL" id="CP000886">
    <property type="protein sequence ID" value="ABX70136.1"/>
    <property type="molecule type" value="Genomic_DNA"/>
</dbReference>
<dbReference type="RefSeq" id="WP_000715937.1">
    <property type="nucleotide sequence ID" value="NC_010102.1"/>
</dbReference>
<dbReference type="SMR" id="A9MXC5"/>
<dbReference type="KEGG" id="spq:SPAB_04825"/>
<dbReference type="PATRIC" id="fig|1016998.12.peg.4539"/>
<dbReference type="HOGENOM" id="CLU_135498_0_0_6"/>
<dbReference type="BioCyc" id="SENT1016998:SPAB_RS19595-MONOMER"/>
<dbReference type="UniPathway" id="UPA00916">
    <property type="reaction ID" value="UER00888"/>
</dbReference>
<dbReference type="Proteomes" id="UP000008556">
    <property type="component" value="Chromosome"/>
</dbReference>
<dbReference type="GO" id="GO:0005829">
    <property type="term" value="C:cytosol"/>
    <property type="evidence" value="ECO:0007669"/>
    <property type="project" value="TreeGrafter"/>
</dbReference>
<dbReference type="GO" id="GO:0062193">
    <property type="term" value="F:D-ribose pyranase activity"/>
    <property type="evidence" value="ECO:0007669"/>
    <property type="project" value="UniProtKB-EC"/>
</dbReference>
<dbReference type="GO" id="GO:0016872">
    <property type="term" value="F:intramolecular lyase activity"/>
    <property type="evidence" value="ECO:0007669"/>
    <property type="project" value="UniProtKB-UniRule"/>
</dbReference>
<dbReference type="GO" id="GO:0048029">
    <property type="term" value="F:monosaccharide binding"/>
    <property type="evidence" value="ECO:0007669"/>
    <property type="project" value="InterPro"/>
</dbReference>
<dbReference type="GO" id="GO:0019303">
    <property type="term" value="P:D-ribose catabolic process"/>
    <property type="evidence" value="ECO:0007669"/>
    <property type="project" value="UniProtKB-UniRule"/>
</dbReference>
<dbReference type="FunFam" id="3.40.1650.10:FF:000002">
    <property type="entry name" value="D-ribose pyranase"/>
    <property type="match status" value="1"/>
</dbReference>
<dbReference type="Gene3D" id="3.40.1650.10">
    <property type="entry name" value="RbsD-like domain"/>
    <property type="match status" value="1"/>
</dbReference>
<dbReference type="HAMAP" id="MF_01661">
    <property type="entry name" value="D_rib_pyranase"/>
    <property type="match status" value="1"/>
</dbReference>
<dbReference type="InterPro" id="IPR023064">
    <property type="entry name" value="D-ribose_pyranase"/>
</dbReference>
<dbReference type="InterPro" id="IPR023750">
    <property type="entry name" value="RbsD-like_sf"/>
</dbReference>
<dbReference type="InterPro" id="IPR007721">
    <property type="entry name" value="RbsD_FucU"/>
</dbReference>
<dbReference type="NCBIfam" id="NF008761">
    <property type="entry name" value="PRK11797.1"/>
    <property type="match status" value="1"/>
</dbReference>
<dbReference type="PANTHER" id="PTHR37831">
    <property type="entry name" value="D-RIBOSE PYRANASE"/>
    <property type="match status" value="1"/>
</dbReference>
<dbReference type="PANTHER" id="PTHR37831:SF1">
    <property type="entry name" value="D-RIBOSE PYRANASE"/>
    <property type="match status" value="1"/>
</dbReference>
<dbReference type="Pfam" id="PF05025">
    <property type="entry name" value="RbsD_FucU"/>
    <property type="match status" value="1"/>
</dbReference>
<dbReference type="SUPFAM" id="SSF102546">
    <property type="entry name" value="RbsD-like"/>
    <property type="match status" value="1"/>
</dbReference>
<protein>
    <recommendedName>
        <fullName evidence="1">D-ribose pyranase</fullName>
        <ecNumber evidence="1">5.4.99.62</ecNumber>
    </recommendedName>
</protein>
<gene>
    <name evidence="1" type="primary">rbsD</name>
    <name type="ordered locus">SPAB_04825</name>
</gene>
<name>RBSD_SALPB</name>